<reference key="1">
    <citation type="journal article" date="2007" name="J. Bacteriol.">
        <title>Genome sequence analysis of the emerging human pathogenic acetic acid bacterium Granulibacter bethesdensis.</title>
        <authorList>
            <person name="Greenberg D.E."/>
            <person name="Porcella S.F."/>
            <person name="Zelazny A.M."/>
            <person name="Virtaneva K."/>
            <person name="Sturdevant D.E."/>
            <person name="Kupko J.J. III"/>
            <person name="Barbian K.D."/>
            <person name="Babar A."/>
            <person name="Dorward D.W."/>
            <person name="Holland S.M."/>
        </authorList>
    </citation>
    <scope>NUCLEOTIDE SEQUENCE [LARGE SCALE GENOMIC DNA]</scope>
    <source>
        <strain>ATCC BAA-1260 / CGDNIH1</strain>
    </source>
</reference>
<protein>
    <recommendedName>
        <fullName evidence="1">Nucleoid-associated protein GbCGDNIH1_0260</fullName>
    </recommendedName>
</protein>
<sequence>MKNLAGLMKQASQMQAKMGEMQAKLETVEAEGSAGAGMVTVTLNGKGDLRRLHIDPKLADPAETEMLEDLIVAAHNDAKKKIETMAAEEMQKVTGGLNLPAGMKLPF</sequence>
<name>Y260_GRABC</name>
<dbReference type="EMBL" id="CP000394">
    <property type="protein sequence ID" value="ABI61158.1"/>
    <property type="molecule type" value="Genomic_DNA"/>
</dbReference>
<dbReference type="RefSeq" id="WP_011630968.1">
    <property type="nucleotide sequence ID" value="NC_008343.2"/>
</dbReference>
<dbReference type="SMR" id="Q0BVJ4"/>
<dbReference type="STRING" id="391165.GbCGDNIH1_0260"/>
<dbReference type="GeneID" id="69744513"/>
<dbReference type="KEGG" id="gbe:GbCGDNIH1_0260"/>
<dbReference type="eggNOG" id="COG0718">
    <property type="taxonomic scope" value="Bacteria"/>
</dbReference>
<dbReference type="HOGENOM" id="CLU_140930_0_1_5"/>
<dbReference type="OrthoDB" id="9803080at2"/>
<dbReference type="Proteomes" id="UP000001963">
    <property type="component" value="Chromosome"/>
</dbReference>
<dbReference type="GO" id="GO:0043590">
    <property type="term" value="C:bacterial nucleoid"/>
    <property type="evidence" value="ECO:0007669"/>
    <property type="project" value="UniProtKB-UniRule"/>
</dbReference>
<dbReference type="GO" id="GO:0005829">
    <property type="term" value="C:cytosol"/>
    <property type="evidence" value="ECO:0007669"/>
    <property type="project" value="TreeGrafter"/>
</dbReference>
<dbReference type="GO" id="GO:0003677">
    <property type="term" value="F:DNA binding"/>
    <property type="evidence" value="ECO:0007669"/>
    <property type="project" value="UniProtKB-UniRule"/>
</dbReference>
<dbReference type="Gene3D" id="3.30.1310.10">
    <property type="entry name" value="Nucleoid-associated protein YbaB-like domain"/>
    <property type="match status" value="1"/>
</dbReference>
<dbReference type="HAMAP" id="MF_00274">
    <property type="entry name" value="DNA_YbaB_EbfC"/>
    <property type="match status" value="1"/>
</dbReference>
<dbReference type="InterPro" id="IPR036894">
    <property type="entry name" value="YbaB-like_sf"/>
</dbReference>
<dbReference type="InterPro" id="IPR004401">
    <property type="entry name" value="YbaB/EbfC"/>
</dbReference>
<dbReference type="NCBIfam" id="TIGR00103">
    <property type="entry name" value="DNA_YbaB_EbfC"/>
    <property type="match status" value="1"/>
</dbReference>
<dbReference type="PANTHER" id="PTHR33449">
    <property type="entry name" value="NUCLEOID-ASSOCIATED PROTEIN YBAB"/>
    <property type="match status" value="1"/>
</dbReference>
<dbReference type="PANTHER" id="PTHR33449:SF1">
    <property type="entry name" value="NUCLEOID-ASSOCIATED PROTEIN YBAB"/>
    <property type="match status" value="1"/>
</dbReference>
<dbReference type="Pfam" id="PF02575">
    <property type="entry name" value="YbaB_DNA_bd"/>
    <property type="match status" value="1"/>
</dbReference>
<dbReference type="PIRSF" id="PIRSF004555">
    <property type="entry name" value="UCP004555"/>
    <property type="match status" value="1"/>
</dbReference>
<dbReference type="SUPFAM" id="SSF82607">
    <property type="entry name" value="YbaB-like"/>
    <property type="match status" value="1"/>
</dbReference>
<evidence type="ECO:0000255" key="1">
    <source>
        <dbReference type="HAMAP-Rule" id="MF_00274"/>
    </source>
</evidence>
<gene>
    <name type="ordered locus">GbCGDNIH1_0260</name>
</gene>
<organism>
    <name type="scientific">Granulibacter bethesdensis (strain ATCC BAA-1260 / CGDNIH1)</name>
    <dbReference type="NCBI Taxonomy" id="391165"/>
    <lineage>
        <taxon>Bacteria</taxon>
        <taxon>Pseudomonadati</taxon>
        <taxon>Pseudomonadota</taxon>
        <taxon>Alphaproteobacteria</taxon>
        <taxon>Acetobacterales</taxon>
        <taxon>Acetobacteraceae</taxon>
        <taxon>Granulibacter</taxon>
    </lineage>
</organism>
<comment type="function">
    <text evidence="1">Binds to DNA and alters its conformation. May be involved in regulation of gene expression, nucleoid organization and DNA protection.</text>
</comment>
<comment type="subunit">
    <text evidence="1">Homodimer.</text>
</comment>
<comment type="subcellular location">
    <subcellularLocation>
        <location evidence="1">Cytoplasm</location>
        <location evidence="1">Nucleoid</location>
    </subcellularLocation>
</comment>
<comment type="similarity">
    <text evidence="1">Belongs to the YbaB/EbfC family.</text>
</comment>
<proteinExistence type="inferred from homology"/>
<accession>Q0BVJ4</accession>
<feature type="chain" id="PRO_1000003745" description="Nucleoid-associated protein GbCGDNIH1_0260">
    <location>
        <begin position="1"/>
        <end position="107"/>
    </location>
</feature>
<keyword id="KW-0963">Cytoplasm</keyword>
<keyword id="KW-0238">DNA-binding</keyword>
<keyword id="KW-1185">Reference proteome</keyword>